<organism>
    <name type="scientific">Geobacter metallireducens (strain ATCC 53774 / DSM 7210 / GS-15)</name>
    <dbReference type="NCBI Taxonomy" id="269799"/>
    <lineage>
        <taxon>Bacteria</taxon>
        <taxon>Pseudomonadati</taxon>
        <taxon>Thermodesulfobacteriota</taxon>
        <taxon>Desulfuromonadia</taxon>
        <taxon>Geobacterales</taxon>
        <taxon>Geobacteraceae</taxon>
        <taxon>Geobacter</taxon>
    </lineage>
</organism>
<gene>
    <name evidence="1" type="primary">pstB</name>
    <name type="ordered locus">Gmet_2704</name>
</gene>
<accession>Q39S52</accession>
<feature type="chain" id="PRO_0000272456" description="Phosphate import ATP-binding protein PstB">
    <location>
        <begin position="1"/>
        <end position="252"/>
    </location>
</feature>
<feature type="domain" description="ABC transporter" evidence="1">
    <location>
        <begin position="5"/>
        <end position="247"/>
    </location>
</feature>
<feature type="binding site" evidence="1">
    <location>
        <begin position="37"/>
        <end position="44"/>
    </location>
    <ligand>
        <name>ATP</name>
        <dbReference type="ChEBI" id="CHEBI:30616"/>
    </ligand>
</feature>
<dbReference type="EC" id="7.3.2.1" evidence="1"/>
<dbReference type="EMBL" id="CP000148">
    <property type="protein sequence ID" value="ABB32922.1"/>
    <property type="molecule type" value="Genomic_DNA"/>
</dbReference>
<dbReference type="RefSeq" id="WP_004511757.1">
    <property type="nucleotide sequence ID" value="NC_007517.1"/>
</dbReference>
<dbReference type="SMR" id="Q39S52"/>
<dbReference type="STRING" id="269799.Gmet_2704"/>
<dbReference type="KEGG" id="gme:Gmet_2704"/>
<dbReference type="eggNOG" id="COG1117">
    <property type="taxonomic scope" value="Bacteria"/>
</dbReference>
<dbReference type="HOGENOM" id="CLU_000604_1_22_7"/>
<dbReference type="Proteomes" id="UP000007073">
    <property type="component" value="Chromosome"/>
</dbReference>
<dbReference type="GO" id="GO:0005886">
    <property type="term" value="C:plasma membrane"/>
    <property type="evidence" value="ECO:0007669"/>
    <property type="project" value="UniProtKB-SubCell"/>
</dbReference>
<dbReference type="GO" id="GO:0005524">
    <property type="term" value="F:ATP binding"/>
    <property type="evidence" value="ECO:0007669"/>
    <property type="project" value="UniProtKB-KW"/>
</dbReference>
<dbReference type="GO" id="GO:0016887">
    <property type="term" value="F:ATP hydrolysis activity"/>
    <property type="evidence" value="ECO:0007669"/>
    <property type="project" value="InterPro"/>
</dbReference>
<dbReference type="GO" id="GO:0015415">
    <property type="term" value="F:ATPase-coupled phosphate ion transmembrane transporter activity"/>
    <property type="evidence" value="ECO:0007669"/>
    <property type="project" value="UniProtKB-EC"/>
</dbReference>
<dbReference type="GO" id="GO:0035435">
    <property type="term" value="P:phosphate ion transmembrane transport"/>
    <property type="evidence" value="ECO:0007669"/>
    <property type="project" value="InterPro"/>
</dbReference>
<dbReference type="CDD" id="cd03260">
    <property type="entry name" value="ABC_PstB_phosphate_transporter"/>
    <property type="match status" value="1"/>
</dbReference>
<dbReference type="FunFam" id="3.40.50.300:FF:000132">
    <property type="entry name" value="Phosphate import ATP-binding protein PstB"/>
    <property type="match status" value="1"/>
</dbReference>
<dbReference type="Gene3D" id="3.40.50.300">
    <property type="entry name" value="P-loop containing nucleotide triphosphate hydrolases"/>
    <property type="match status" value="1"/>
</dbReference>
<dbReference type="InterPro" id="IPR003593">
    <property type="entry name" value="AAA+_ATPase"/>
</dbReference>
<dbReference type="InterPro" id="IPR003439">
    <property type="entry name" value="ABC_transporter-like_ATP-bd"/>
</dbReference>
<dbReference type="InterPro" id="IPR017871">
    <property type="entry name" value="ABC_transporter-like_CS"/>
</dbReference>
<dbReference type="InterPro" id="IPR027417">
    <property type="entry name" value="P-loop_NTPase"/>
</dbReference>
<dbReference type="InterPro" id="IPR005670">
    <property type="entry name" value="PstB-like"/>
</dbReference>
<dbReference type="NCBIfam" id="TIGR00972">
    <property type="entry name" value="3a0107s01c2"/>
    <property type="match status" value="1"/>
</dbReference>
<dbReference type="PANTHER" id="PTHR43423">
    <property type="entry name" value="ABC TRANSPORTER I FAMILY MEMBER 17"/>
    <property type="match status" value="1"/>
</dbReference>
<dbReference type="PANTHER" id="PTHR43423:SF1">
    <property type="entry name" value="ABC TRANSPORTER I FAMILY MEMBER 17"/>
    <property type="match status" value="1"/>
</dbReference>
<dbReference type="Pfam" id="PF00005">
    <property type="entry name" value="ABC_tran"/>
    <property type="match status" value="1"/>
</dbReference>
<dbReference type="SMART" id="SM00382">
    <property type="entry name" value="AAA"/>
    <property type="match status" value="1"/>
</dbReference>
<dbReference type="SUPFAM" id="SSF52540">
    <property type="entry name" value="P-loop containing nucleoside triphosphate hydrolases"/>
    <property type="match status" value="1"/>
</dbReference>
<dbReference type="PROSITE" id="PS00211">
    <property type="entry name" value="ABC_TRANSPORTER_1"/>
    <property type="match status" value="1"/>
</dbReference>
<dbReference type="PROSITE" id="PS50893">
    <property type="entry name" value="ABC_TRANSPORTER_2"/>
    <property type="match status" value="1"/>
</dbReference>
<dbReference type="PROSITE" id="PS51238">
    <property type="entry name" value="PSTB"/>
    <property type="match status" value="1"/>
</dbReference>
<evidence type="ECO:0000255" key="1">
    <source>
        <dbReference type="HAMAP-Rule" id="MF_01702"/>
    </source>
</evidence>
<name>PSTB_GEOMG</name>
<protein>
    <recommendedName>
        <fullName evidence="1">Phosphate import ATP-binding protein PstB</fullName>
        <ecNumber evidence="1">7.3.2.1</ecNumber>
    </recommendedName>
    <alternativeName>
        <fullName evidence="1">ABC phosphate transporter</fullName>
    </alternativeName>
    <alternativeName>
        <fullName evidence="1">Phosphate-transporting ATPase</fullName>
    </alternativeName>
</protein>
<keyword id="KW-0067">ATP-binding</keyword>
<keyword id="KW-0997">Cell inner membrane</keyword>
<keyword id="KW-1003">Cell membrane</keyword>
<keyword id="KW-0472">Membrane</keyword>
<keyword id="KW-0547">Nucleotide-binding</keyword>
<keyword id="KW-0592">Phosphate transport</keyword>
<keyword id="KW-1185">Reference proteome</keyword>
<keyword id="KW-1278">Translocase</keyword>
<keyword id="KW-0813">Transport</keyword>
<sequence>MNTKVKIDKLNVHFGQTHAVKDVSIDVPENTVTAIIGPSGCGKSTMLRSLNRMHDLFPNARVTGKVLLDGNDIYDRKVDPVSIRRRVGMVFQKPNPFPAMSIYDNVVAGYKLNGRVKKSDADEIVETSLRRVALWDEVKDRLKSNSMELSGGQQQRLCIARTIAVQPEVILMDEPASALDPISTLKIEELIEELTEKYTIIIVTHNMQQAARVSDYTAFFYMGDLVEWGETKKLFTTPEKKQTEDYITGRFG</sequence>
<reference key="1">
    <citation type="journal article" date="2009" name="BMC Microbiol.">
        <title>The genome sequence of Geobacter metallireducens: features of metabolism, physiology and regulation common and dissimilar to Geobacter sulfurreducens.</title>
        <authorList>
            <person name="Aklujkar M."/>
            <person name="Krushkal J."/>
            <person name="DiBartolo G."/>
            <person name="Lapidus A."/>
            <person name="Land M.L."/>
            <person name="Lovley D.R."/>
        </authorList>
    </citation>
    <scope>NUCLEOTIDE SEQUENCE [LARGE SCALE GENOMIC DNA]</scope>
    <source>
        <strain>ATCC 53774 / DSM 7210 / GS-15</strain>
    </source>
</reference>
<proteinExistence type="inferred from homology"/>
<comment type="function">
    <text evidence="1">Part of the ABC transporter complex PstSACB involved in phosphate import. Responsible for energy coupling to the transport system.</text>
</comment>
<comment type="catalytic activity">
    <reaction evidence="1">
        <text>phosphate(out) + ATP + H2O = ADP + 2 phosphate(in) + H(+)</text>
        <dbReference type="Rhea" id="RHEA:24440"/>
        <dbReference type="ChEBI" id="CHEBI:15377"/>
        <dbReference type="ChEBI" id="CHEBI:15378"/>
        <dbReference type="ChEBI" id="CHEBI:30616"/>
        <dbReference type="ChEBI" id="CHEBI:43474"/>
        <dbReference type="ChEBI" id="CHEBI:456216"/>
        <dbReference type="EC" id="7.3.2.1"/>
    </reaction>
</comment>
<comment type="subunit">
    <text evidence="1">The complex is composed of two ATP-binding proteins (PstB), two transmembrane proteins (PstC and PstA) and a solute-binding protein (PstS).</text>
</comment>
<comment type="subcellular location">
    <subcellularLocation>
        <location evidence="1">Cell inner membrane</location>
        <topology evidence="1">Peripheral membrane protein</topology>
    </subcellularLocation>
</comment>
<comment type="similarity">
    <text evidence="1">Belongs to the ABC transporter superfamily. Phosphate importer (TC 3.A.1.7) family.</text>
</comment>